<accession>Q3J1M0</accession>
<name>RS18_CERS4</name>
<dbReference type="EMBL" id="CP000143">
    <property type="protein sequence ID" value="ABA79314.1"/>
    <property type="molecule type" value="Genomic_DNA"/>
</dbReference>
<dbReference type="RefSeq" id="WP_002720283.1">
    <property type="nucleotide sequence ID" value="NZ_AKVW01000001.1"/>
</dbReference>
<dbReference type="RefSeq" id="YP_353215.1">
    <property type="nucleotide sequence ID" value="NC_007493.2"/>
</dbReference>
<dbReference type="SMR" id="Q3J1M0"/>
<dbReference type="STRING" id="272943.RSP_0140"/>
<dbReference type="EnsemblBacteria" id="ABA79314">
    <property type="protein sequence ID" value="ABA79314"/>
    <property type="gene ID" value="RSP_0140"/>
</dbReference>
<dbReference type="GeneID" id="3719560"/>
<dbReference type="KEGG" id="rsp:RSP_0140"/>
<dbReference type="PATRIC" id="fig|272943.9.peg.2080"/>
<dbReference type="eggNOG" id="COG0238">
    <property type="taxonomic scope" value="Bacteria"/>
</dbReference>
<dbReference type="OrthoDB" id="9812008at2"/>
<dbReference type="PhylomeDB" id="Q3J1M0"/>
<dbReference type="Proteomes" id="UP000002703">
    <property type="component" value="Chromosome 1"/>
</dbReference>
<dbReference type="GO" id="GO:0022627">
    <property type="term" value="C:cytosolic small ribosomal subunit"/>
    <property type="evidence" value="ECO:0007669"/>
    <property type="project" value="TreeGrafter"/>
</dbReference>
<dbReference type="GO" id="GO:0070181">
    <property type="term" value="F:small ribosomal subunit rRNA binding"/>
    <property type="evidence" value="ECO:0007669"/>
    <property type="project" value="TreeGrafter"/>
</dbReference>
<dbReference type="GO" id="GO:0003735">
    <property type="term" value="F:structural constituent of ribosome"/>
    <property type="evidence" value="ECO:0007669"/>
    <property type="project" value="InterPro"/>
</dbReference>
<dbReference type="GO" id="GO:0006412">
    <property type="term" value="P:translation"/>
    <property type="evidence" value="ECO:0007669"/>
    <property type="project" value="UniProtKB-UniRule"/>
</dbReference>
<dbReference type="Gene3D" id="4.10.640.10">
    <property type="entry name" value="Ribosomal protein S18"/>
    <property type="match status" value="1"/>
</dbReference>
<dbReference type="HAMAP" id="MF_00270">
    <property type="entry name" value="Ribosomal_bS18"/>
    <property type="match status" value="1"/>
</dbReference>
<dbReference type="InterPro" id="IPR001648">
    <property type="entry name" value="Ribosomal_bS18"/>
</dbReference>
<dbReference type="InterPro" id="IPR018275">
    <property type="entry name" value="Ribosomal_bS18_CS"/>
</dbReference>
<dbReference type="InterPro" id="IPR036870">
    <property type="entry name" value="Ribosomal_bS18_sf"/>
</dbReference>
<dbReference type="NCBIfam" id="TIGR00165">
    <property type="entry name" value="S18"/>
    <property type="match status" value="1"/>
</dbReference>
<dbReference type="PANTHER" id="PTHR13479">
    <property type="entry name" value="30S RIBOSOMAL PROTEIN S18"/>
    <property type="match status" value="1"/>
</dbReference>
<dbReference type="PANTHER" id="PTHR13479:SF40">
    <property type="entry name" value="SMALL RIBOSOMAL SUBUNIT PROTEIN BS18M"/>
    <property type="match status" value="1"/>
</dbReference>
<dbReference type="Pfam" id="PF01084">
    <property type="entry name" value="Ribosomal_S18"/>
    <property type="match status" value="1"/>
</dbReference>
<dbReference type="PRINTS" id="PR00974">
    <property type="entry name" value="RIBOSOMALS18"/>
</dbReference>
<dbReference type="SUPFAM" id="SSF46911">
    <property type="entry name" value="Ribosomal protein S18"/>
    <property type="match status" value="1"/>
</dbReference>
<dbReference type="PROSITE" id="PS00057">
    <property type="entry name" value="RIBOSOMAL_S18"/>
    <property type="match status" value="1"/>
</dbReference>
<protein>
    <recommendedName>
        <fullName evidence="1">Small ribosomal subunit protein bS18</fullName>
    </recommendedName>
    <alternativeName>
        <fullName evidence="2">30S ribosomal protein S18</fullName>
    </alternativeName>
</protein>
<organism>
    <name type="scientific">Cereibacter sphaeroides (strain ATCC 17023 / DSM 158 / JCM 6121 / CCUG 31486 / LMG 2827 / NBRC 12203 / NCIMB 8253 / ATH 2.4.1.)</name>
    <name type="common">Rhodobacter sphaeroides</name>
    <dbReference type="NCBI Taxonomy" id="272943"/>
    <lineage>
        <taxon>Bacteria</taxon>
        <taxon>Pseudomonadati</taxon>
        <taxon>Pseudomonadota</taxon>
        <taxon>Alphaproteobacteria</taxon>
        <taxon>Rhodobacterales</taxon>
        <taxon>Paracoccaceae</taxon>
        <taxon>Cereibacter</taxon>
    </lineage>
</organism>
<reference key="1">
    <citation type="submission" date="2005-09" db="EMBL/GenBank/DDBJ databases">
        <title>Complete sequence of chromosome 1 of Rhodobacter sphaeroides 2.4.1.</title>
        <authorList>
            <person name="Copeland A."/>
            <person name="Lucas S."/>
            <person name="Lapidus A."/>
            <person name="Barry K."/>
            <person name="Detter J.C."/>
            <person name="Glavina T."/>
            <person name="Hammon N."/>
            <person name="Israni S."/>
            <person name="Pitluck S."/>
            <person name="Richardson P."/>
            <person name="Mackenzie C."/>
            <person name="Choudhary M."/>
            <person name="Larimer F."/>
            <person name="Hauser L.J."/>
            <person name="Land M."/>
            <person name="Donohue T.J."/>
            <person name="Kaplan S."/>
        </authorList>
    </citation>
    <scope>NUCLEOTIDE SEQUENCE [LARGE SCALE GENOMIC DNA]</scope>
    <source>
        <strain>ATCC 17023 / DSM 158 / JCM 6121 / CCUG 31486 / LMG 2827 / NBRC 12203 / NCIMB 8253 / ATH 2.4.1.</strain>
    </source>
</reference>
<feature type="chain" id="PRO_1000003589" description="Small ribosomal subunit protein bS18">
    <location>
        <begin position="1"/>
        <end position="75"/>
    </location>
</feature>
<proteinExistence type="inferred from homology"/>
<comment type="function">
    <text evidence="1">Binds as a heterodimer with protein bS6 to the central domain of the 16S rRNA, where it helps stabilize the platform of the 30S subunit.</text>
</comment>
<comment type="subunit">
    <text evidence="1">Part of the 30S ribosomal subunit. Forms a tight heterodimer with protein bS6.</text>
</comment>
<comment type="similarity">
    <text evidence="1">Belongs to the bacterial ribosomal protein bS18 family.</text>
</comment>
<gene>
    <name evidence="1" type="primary">rpsR</name>
    <name type="ordered locus">RHOS4_17460</name>
    <name type="ORF">RSP_0140</name>
</gene>
<sequence length="75" mass="8579">MANKPFFRRRKVCPFSGDNAPAIDYKDTRLLQRYISERGKIVPSRITAVSAKKQRELAAAIKRARFLALLPYAVK</sequence>
<evidence type="ECO:0000255" key="1">
    <source>
        <dbReference type="HAMAP-Rule" id="MF_00270"/>
    </source>
</evidence>
<evidence type="ECO:0000305" key="2"/>
<keyword id="KW-1185">Reference proteome</keyword>
<keyword id="KW-0687">Ribonucleoprotein</keyword>
<keyword id="KW-0689">Ribosomal protein</keyword>
<keyword id="KW-0694">RNA-binding</keyword>
<keyword id="KW-0699">rRNA-binding</keyword>